<reference key="1">
    <citation type="journal article" date="2007" name="J. Bacteriol.">
        <title>Complete genome sequence of Haemophilus somnus (Histophilus somni) strain 129Pt and comparison to Haemophilus ducreyi 35000HP and Haemophilus influenzae Rd.</title>
        <authorList>
            <person name="Challacombe J.F."/>
            <person name="Duncan A.J."/>
            <person name="Brettin T.S."/>
            <person name="Bruce D."/>
            <person name="Chertkov O."/>
            <person name="Detter J.C."/>
            <person name="Han C.S."/>
            <person name="Misra M."/>
            <person name="Richardson P."/>
            <person name="Tapia R."/>
            <person name="Thayer N."/>
            <person name="Xie G."/>
            <person name="Inzana T.J."/>
        </authorList>
    </citation>
    <scope>NUCLEOTIDE SEQUENCE [LARGE SCALE GENOMIC DNA]</scope>
    <source>
        <strain>129Pt</strain>
    </source>
</reference>
<comment type="function">
    <text evidence="1">Catalyzes the cleavage of 5-oxoproline to form L-glutamate coupled to the hydrolysis of ATP to ADP and inorganic phosphate.</text>
</comment>
<comment type="catalytic activity">
    <reaction evidence="1">
        <text>5-oxo-L-proline + ATP + 2 H2O = L-glutamate + ADP + phosphate + H(+)</text>
        <dbReference type="Rhea" id="RHEA:10348"/>
        <dbReference type="ChEBI" id="CHEBI:15377"/>
        <dbReference type="ChEBI" id="CHEBI:15378"/>
        <dbReference type="ChEBI" id="CHEBI:29985"/>
        <dbReference type="ChEBI" id="CHEBI:30616"/>
        <dbReference type="ChEBI" id="CHEBI:43474"/>
        <dbReference type="ChEBI" id="CHEBI:58402"/>
        <dbReference type="ChEBI" id="CHEBI:456216"/>
        <dbReference type="EC" id="3.5.2.9"/>
    </reaction>
</comment>
<comment type="subunit">
    <text evidence="1">Forms a complex composed of PxpA, PxpB and PxpC.</text>
</comment>
<comment type="similarity">
    <text evidence="1">Belongs to the LamB/PxpA family.</text>
</comment>
<gene>
    <name evidence="1" type="primary">pxpA</name>
    <name type="ordered locus">HS_0027</name>
</gene>
<feature type="chain" id="PRO_1000045208" description="5-oxoprolinase subunit A">
    <location>
        <begin position="1"/>
        <end position="247"/>
    </location>
</feature>
<protein>
    <recommendedName>
        <fullName evidence="1">5-oxoprolinase subunit A</fullName>
        <shortName evidence="1">5-OPase subunit A</shortName>
        <ecNumber evidence="1">3.5.2.9</ecNumber>
    </recommendedName>
    <alternativeName>
        <fullName evidence="1">5-oxoprolinase (ATP-hydrolyzing) subunit A</fullName>
    </alternativeName>
</protein>
<dbReference type="EC" id="3.5.2.9" evidence="1"/>
<dbReference type="EMBL" id="CP000436">
    <property type="protein sequence ID" value="ABI24308.1"/>
    <property type="molecule type" value="Genomic_DNA"/>
</dbReference>
<dbReference type="SMR" id="Q0I195"/>
<dbReference type="KEGG" id="hso:HS_0027"/>
<dbReference type="eggNOG" id="COG1540">
    <property type="taxonomic scope" value="Bacteria"/>
</dbReference>
<dbReference type="HOGENOM" id="CLU_069535_0_0_6"/>
<dbReference type="GO" id="GO:0017168">
    <property type="term" value="F:5-oxoprolinase (ATP-hydrolyzing) activity"/>
    <property type="evidence" value="ECO:0007669"/>
    <property type="project" value="UniProtKB-UniRule"/>
</dbReference>
<dbReference type="GO" id="GO:0005524">
    <property type="term" value="F:ATP binding"/>
    <property type="evidence" value="ECO:0007669"/>
    <property type="project" value="UniProtKB-UniRule"/>
</dbReference>
<dbReference type="GO" id="GO:0005975">
    <property type="term" value="P:carbohydrate metabolic process"/>
    <property type="evidence" value="ECO:0007669"/>
    <property type="project" value="InterPro"/>
</dbReference>
<dbReference type="CDD" id="cd10800">
    <property type="entry name" value="LamB_YcsF_YbgL_like"/>
    <property type="match status" value="1"/>
</dbReference>
<dbReference type="Gene3D" id="3.20.20.370">
    <property type="entry name" value="Glycoside hydrolase/deacetylase"/>
    <property type="match status" value="1"/>
</dbReference>
<dbReference type="HAMAP" id="MF_00691">
    <property type="entry name" value="PxpA"/>
    <property type="match status" value="1"/>
</dbReference>
<dbReference type="InterPro" id="IPR011330">
    <property type="entry name" value="Glyco_hydro/deAcase_b/a-brl"/>
</dbReference>
<dbReference type="InterPro" id="IPR005501">
    <property type="entry name" value="LamB/YcsF/PxpA-like"/>
</dbReference>
<dbReference type="NCBIfam" id="NF003814">
    <property type="entry name" value="PRK05406.1-3"/>
    <property type="match status" value="1"/>
</dbReference>
<dbReference type="NCBIfam" id="NF003815">
    <property type="entry name" value="PRK05406.1-4"/>
    <property type="match status" value="1"/>
</dbReference>
<dbReference type="NCBIfam" id="NF003816">
    <property type="entry name" value="PRK05406.1-5"/>
    <property type="match status" value="1"/>
</dbReference>
<dbReference type="PANTHER" id="PTHR30292:SF0">
    <property type="entry name" value="5-OXOPROLINASE SUBUNIT A"/>
    <property type="match status" value="1"/>
</dbReference>
<dbReference type="PANTHER" id="PTHR30292">
    <property type="entry name" value="UNCHARACTERIZED PROTEIN YBGL-RELATED"/>
    <property type="match status" value="1"/>
</dbReference>
<dbReference type="Pfam" id="PF03746">
    <property type="entry name" value="LamB_YcsF"/>
    <property type="match status" value="1"/>
</dbReference>
<dbReference type="SUPFAM" id="SSF88713">
    <property type="entry name" value="Glycoside hydrolase/deacetylase"/>
    <property type="match status" value="1"/>
</dbReference>
<organism>
    <name type="scientific">Histophilus somni (strain 129Pt)</name>
    <name type="common">Haemophilus somnus</name>
    <dbReference type="NCBI Taxonomy" id="205914"/>
    <lineage>
        <taxon>Bacteria</taxon>
        <taxon>Pseudomonadati</taxon>
        <taxon>Pseudomonadota</taxon>
        <taxon>Gammaproteobacteria</taxon>
        <taxon>Pasteurellales</taxon>
        <taxon>Pasteurellaceae</taxon>
        <taxon>Histophilus</taxon>
    </lineage>
</organism>
<keyword id="KW-0067">ATP-binding</keyword>
<keyword id="KW-0378">Hydrolase</keyword>
<keyword id="KW-0547">Nucleotide-binding</keyword>
<name>PXPA_HISS1</name>
<sequence>MKQIDLNVDLAEGCANDQQLLQLVSSANVCCGLHAGDYNEIRKAILWAKENDVRIGAHPSFPDRENFGRTNMQLPDDELKACLFYQLGAVKALCDASGVTMEYVKPHGALYNMAAKDPHLAALIAETVKSVDPSLKLMGLSGSIMLTVAEQHGLATISEVFADRHYLADGSLVPRTRDDAMVENDEEAISQVLQMVLEGTVPTVDGGNVAIKADSICLHGDGEHAVVFAKRIRRELKEKGILVTSSI</sequence>
<evidence type="ECO:0000255" key="1">
    <source>
        <dbReference type="HAMAP-Rule" id="MF_00691"/>
    </source>
</evidence>
<proteinExistence type="inferred from homology"/>
<accession>Q0I195</accession>